<evidence type="ECO:0000250" key="1">
    <source>
        <dbReference type="UniProtKB" id="P35414"/>
    </source>
</evidence>
<evidence type="ECO:0000250" key="2">
    <source>
        <dbReference type="UniProtKB" id="P79960"/>
    </source>
</evidence>
<evidence type="ECO:0000250" key="3">
    <source>
        <dbReference type="UniProtKB" id="Q4VA82"/>
    </source>
</evidence>
<evidence type="ECO:0000250" key="4">
    <source>
        <dbReference type="UniProtKB" id="Q9WV08"/>
    </source>
</evidence>
<evidence type="ECO:0000255" key="5"/>
<evidence type="ECO:0000255" key="6">
    <source>
        <dbReference type="PROSITE-ProRule" id="PRU00521"/>
    </source>
</evidence>
<evidence type="ECO:0000269" key="7">
    <source>
    </source>
</evidence>
<evidence type="ECO:0000269" key="8">
    <source>
    </source>
</evidence>
<evidence type="ECO:0000269" key="9">
    <source>
    </source>
</evidence>
<evidence type="ECO:0000269" key="10">
    <source>
    </source>
</evidence>
<evidence type="ECO:0000269" key="11">
    <source>
    </source>
</evidence>
<evidence type="ECO:0000305" key="12"/>
<evidence type="ECO:0000312" key="13">
    <source>
        <dbReference type="EMBL" id="AAH56308.2"/>
    </source>
</evidence>
<evidence type="ECO:0000312" key="14">
    <source>
        <dbReference type="EMBL" id="AAI24151.1"/>
    </source>
</evidence>
<evidence type="ECO:0000312" key="15">
    <source>
        <dbReference type="EMBL" id="ABI99470.1"/>
    </source>
</evidence>
<keyword id="KW-0037">Angiogenesis</keyword>
<keyword id="KW-1003">Cell membrane</keyword>
<keyword id="KW-0217">Developmental protein</keyword>
<keyword id="KW-1015">Disulfide bond</keyword>
<keyword id="KW-0297">G-protein coupled receptor</keyword>
<keyword id="KW-0306">Gastrulation</keyword>
<keyword id="KW-0325">Glycoprotein</keyword>
<keyword id="KW-0472">Membrane</keyword>
<keyword id="KW-0675">Receptor</keyword>
<keyword id="KW-1185">Reference proteome</keyword>
<keyword id="KW-0807">Transducer</keyword>
<keyword id="KW-0812">Transmembrane</keyword>
<keyword id="KW-1133">Transmembrane helix</keyword>
<name>APJA_DANRE</name>
<sequence length="362" mass="40649">MEPTSEYTETYDYYDTGYNDSGCDYSEWEPSYSLIPVLYMLIFILGLSGNGVVIFTVWRAKSKRRAADVYIGNLALADLTFVITLPLWAVYTALGYHWPFGVALCKISSYVVLVNMYASVFCLTCLSFDRYLAIVHSLSSGRLRSRATMLASLGAIWFLSCLLAVPTLLFRTTVDDTGSNRTTCAMDFSLVTLNQDHESLWIAGLSLSSSALGFLLPFLAMTVCYCFIGCTVTRHFSHLRKEDQKKRRLLKIITTLVVVFAFCWTPFHVLKSMDALSYLDLAPNSCGFLHFLLLAHPYATCLAYVNSCLNPFLYAFFDLRFRSQCLCLLNLKKAMHGHMSSMSSTLSAQTQKSEVQSLATKV</sequence>
<comment type="function">
    <text evidence="1 2 3 4 8 9 10 11">G protein-coupled receptor for peptide hormones apelin (apln) and apelin receptor early endogenous ligand (apela), that plays a role in the regulation of normal cardiovascular function and fluid homeostasis. When acting as apelin receptor, activates both G(i) protein pathway that inhibits adenylate cyclase activity, and the beta-arrestin pathway that promotes internalization of the receptor (PubMed:17336906, PubMed:24316148, PubMed:24407481). Also functions as mechanoreceptor that is activated by pathological stimuli in a G-protein-independent fashion to induce beta-arrestin signaling, hence eliciting cardiac hypertrophy. However, the presence of apelin ligand blunts cardiac hypertrophic induction from APLNR/APJ on response to pathological stimuli (By similarity). Plays a key role in early development such as gastrulation, blood vessels formation and heart morphogenesis by acting as a receptor for apela hormone, promoting endoderm and mesendoderm cell migration and regulating the migration of cells fated to become myocardial progenitors, respectively (PubMed:17336906, PubMed:24316148, PubMed:24407481, PubMed:26017639). Positively regulates angioblast migration toward the embryonic midline, i.e. the position of the future vessel formation, during vasculogenesis (PubMed:26017639). May promote sinus venosus (SV)-derived endothelial cells migration into the developing heart to promote coronary blood vessel development (By similarity). Required for cardiovascular development, particularly for intersomitic vein angiogenesis by acting as a receptor for apln hormone (By similarity). Also plays a role in various processes in adults such as regulation of blood vessel formation, blood pressure, heart contractility, and heart failure (By similarity). Acts redundantly with agtrl1b in heart development (PubMed:17336906).</text>
</comment>
<comment type="subcellular location">
    <subcellularLocation>
        <location evidence="2">Cell membrane</location>
        <topology evidence="2">Multi-pass membrane protein</topology>
    </subcellularLocation>
    <text evidence="1 2">Internalized to the cytoplasm after exposure to apelin (apln). After exposure to apelin receptor early endogenous ligand (apela), internalized from the cell surface into an endosomal recycling compartment, from where it is recycled to the cell membrane.</text>
</comment>
<comment type="tissue specificity">
    <text evidence="7">First expressed before epiboly in dorsal precursors. During epiboly, expressed in the enveloping layer, yolk syncytial layer and migrating mesendoderm. During segmentation stages, expressed in epithelial structures such as adaxial cells, border cells of the newly formed somites, developing lens, otic vesicles and venous vasculature.</text>
</comment>
<comment type="disruption phenotype">
    <text evidence="9 10 11">Morpholino knockdown of the protein induces embryonic lethality due to cardiac dysplasia with little to no blood circulation around 6 days post-fertilization (dpf) (PubMed:24316148). Mutant embryos show pericardial edema and accumulation of erythrocytes in the intermediate cell mass (ICM) at 30 hours post-fertilization (hpf) (PubMed:24316148). Display decreased angioblast migration to the embryonic midline during late gastrulation (PubMed:24316148, PubMed:24407481, PubMed:26017639).</text>
</comment>
<comment type="similarity">
    <text evidence="6">Belongs to the G-protein coupled receptor 1 family.</text>
</comment>
<gene>
    <name type="primary">aplnra</name>
    <name evidence="15" type="synonym">agtrl1</name>
    <name type="synonym">agtrl1a</name>
</gene>
<dbReference type="EMBL" id="DQ983235">
    <property type="protein sequence ID" value="ABI99470.1"/>
    <property type="molecule type" value="mRNA"/>
</dbReference>
<dbReference type="EMBL" id="BC056308">
    <property type="protein sequence ID" value="AAH56308.2"/>
    <property type="molecule type" value="mRNA"/>
</dbReference>
<dbReference type="EMBL" id="BC124150">
    <property type="protein sequence ID" value="AAI24151.1"/>
    <property type="molecule type" value="mRNA"/>
</dbReference>
<dbReference type="RefSeq" id="NP_001068573.1">
    <property type="nucleotide sequence ID" value="NM_001075105.1"/>
</dbReference>
<dbReference type="SMR" id="Q7SZP9"/>
<dbReference type="FunCoup" id="Q7SZP9">
    <property type="interactions" value="245"/>
</dbReference>
<dbReference type="STRING" id="7955.ENSDARP00000068614"/>
<dbReference type="GlyCosmos" id="Q7SZP9">
    <property type="glycosylation" value="2 sites, No reported glycans"/>
</dbReference>
<dbReference type="PaxDb" id="7955-ENSDARP00000068614"/>
<dbReference type="Ensembl" id="ENSDART00000074125">
    <property type="protein sequence ID" value="ENSDARP00000068614"/>
    <property type="gene ID" value="ENSDARG00000002172"/>
</dbReference>
<dbReference type="GeneID" id="561935"/>
<dbReference type="KEGG" id="dre:561935"/>
<dbReference type="AGR" id="ZFIN:ZDB-GENE-060929-512"/>
<dbReference type="CTD" id="561935"/>
<dbReference type="ZFIN" id="ZDB-GENE-060929-512">
    <property type="gene designation" value="aplnra"/>
</dbReference>
<dbReference type="eggNOG" id="KOG3656">
    <property type="taxonomic scope" value="Eukaryota"/>
</dbReference>
<dbReference type="HOGENOM" id="CLU_009579_8_1_1"/>
<dbReference type="InParanoid" id="Q7SZP9"/>
<dbReference type="OMA" id="MYASIFC"/>
<dbReference type="OrthoDB" id="5974286at2759"/>
<dbReference type="PhylomeDB" id="Q7SZP9"/>
<dbReference type="TreeFam" id="TF330024"/>
<dbReference type="Reactome" id="R-DRE-375276">
    <property type="pathway name" value="Peptide ligand-binding receptors"/>
</dbReference>
<dbReference type="Reactome" id="R-DRE-418594">
    <property type="pathway name" value="G alpha (i) signalling events"/>
</dbReference>
<dbReference type="PRO" id="PR:Q7SZP9"/>
<dbReference type="Proteomes" id="UP000000437">
    <property type="component" value="Chromosome 8"/>
</dbReference>
<dbReference type="Bgee" id="ENSDARG00000002172">
    <property type="expression patterns" value="Expressed in gastrula and 52 other cell types or tissues"/>
</dbReference>
<dbReference type="GO" id="GO:0005886">
    <property type="term" value="C:plasma membrane"/>
    <property type="evidence" value="ECO:0000250"/>
    <property type="project" value="UniProtKB"/>
</dbReference>
<dbReference type="GO" id="GO:0060182">
    <property type="term" value="F:apelin receptor activity"/>
    <property type="evidence" value="ECO:0000314"/>
    <property type="project" value="ZFIN"/>
</dbReference>
<dbReference type="GO" id="GO:0140897">
    <property type="term" value="F:mechanoreceptor activity"/>
    <property type="evidence" value="ECO:0000250"/>
    <property type="project" value="UniProtKB"/>
</dbReference>
<dbReference type="GO" id="GO:0035479">
    <property type="term" value="P:angioblast cell migration from lateral mesoderm to midline"/>
    <property type="evidence" value="ECO:0000315"/>
    <property type="project" value="ZFIN"/>
</dbReference>
<dbReference type="GO" id="GO:0001568">
    <property type="term" value="P:blood vessel development"/>
    <property type="evidence" value="ECO:0000318"/>
    <property type="project" value="GO_Central"/>
</dbReference>
<dbReference type="GO" id="GO:0048738">
    <property type="term" value="P:cardiac muscle tissue development"/>
    <property type="evidence" value="ECO:0000250"/>
    <property type="project" value="UniProtKB"/>
</dbReference>
<dbReference type="GO" id="GO:0016477">
    <property type="term" value="P:cell migration"/>
    <property type="evidence" value="ECO:0000250"/>
    <property type="project" value="UniProtKB"/>
</dbReference>
<dbReference type="GO" id="GO:0042074">
    <property type="term" value="P:cell migration involved in gastrulation"/>
    <property type="evidence" value="ECO:0000315"/>
    <property type="project" value="ZFIN"/>
</dbReference>
<dbReference type="GO" id="GO:0060976">
    <property type="term" value="P:coronary vasculature development"/>
    <property type="evidence" value="ECO:0000250"/>
    <property type="project" value="UniProtKB"/>
</dbReference>
<dbReference type="GO" id="GO:0061371">
    <property type="term" value="P:determination of heart left/right asymmetry"/>
    <property type="evidence" value="ECO:0000315"/>
    <property type="project" value="ZFIN"/>
</dbReference>
<dbReference type="GO" id="GO:0007368">
    <property type="term" value="P:determination of left/right symmetry"/>
    <property type="evidence" value="ECO:0000315"/>
    <property type="project" value="ZFIN"/>
</dbReference>
<dbReference type="GO" id="GO:0071910">
    <property type="term" value="P:determination of liver left/right asymmetry"/>
    <property type="evidence" value="ECO:0000315"/>
    <property type="project" value="ZFIN"/>
</dbReference>
<dbReference type="GO" id="GO:0035987">
    <property type="term" value="P:endodermal cell differentiation"/>
    <property type="evidence" value="ECO:0000316"/>
    <property type="project" value="ZFIN"/>
</dbReference>
<dbReference type="GO" id="GO:0055113">
    <property type="term" value="P:epiboly involved in gastrulation with mouth forming second"/>
    <property type="evidence" value="ECO:0000315"/>
    <property type="project" value="ZFIN"/>
</dbReference>
<dbReference type="GO" id="GO:0007186">
    <property type="term" value="P:G protein-coupled receptor signaling pathway"/>
    <property type="evidence" value="ECO:0000250"/>
    <property type="project" value="UniProtKB"/>
</dbReference>
<dbReference type="GO" id="GO:0001702">
    <property type="term" value="P:gastrulation with mouth forming second"/>
    <property type="evidence" value="ECO:0000250"/>
    <property type="project" value="UniProtKB"/>
</dbReference>
<dbReference type="GO" id="GO:0007507">
    <property type="term" value="P:heart development"/>
    <property type="evidence" value="ECO:0000316"/>
    <property type="project" value="UniProtKB"/>
</dbReference>
<dbReference type="GO" id="GO:0070121">
    <property type="term" value="P:Kupffer's vesicle development"/>
    <property type="evidence" value="ECO:0000315"/>
    <property type="project" value="ZFIN"/>
</dbReference>
<dbReference type="GO" id="GO:0001945">
    <property type="term" value="P:lymph vessel development"/>
    <property type="evidence" value="ECO:0000315"/>
    <property type="project" value="ZFIN"/>
</dbReference>
<dbReference type="GO" id="GO:0043951">
    <property type="term" value="P:negative regulation of cAMP-mediated signaling"/>
    <property type="evidence" value="ECO:0000250"/>
    <property type="project" value="UniProtKB"/>
</dbReference>
<dbReference type="GO" id="GO:0045766">
    <property type="term" value="P:positive regulation of angiogenesis"/>
    <property type="evidence" value="ECO:0000250"/>
    <property type="project" value="UniProtKB"/>
</dbReference>
<dbReference type="GO" id="GO:1903589">
    <property type="term" value="P:positive regulation of blood vessel endothelial cell proliferation involved in sprouting angiogenesis"/>
    <property type="evidence" value="ECO:0000250"/>
    <property type="project" value="UniProtKB"/>
</dbReference>
<dbReference type="GO" id="GO:0051281">
    <property type="term" value="P:positive regulation of release of sequestered calcium ion into cytosol"/>
    <property type="evidence" value="ECO:0000250"/>
    <property type="project" value="UniProtKB"/>
</dbReference>
<dbReference type="GO" id="GO:1900107">
    <property type="term" value="P:regulation of nodal signaling pathway"/>
    <property type="evidence" value="ECO:0000316"/>
    <property type="project" value="ZFIN"/>
</dbReference>
<dbReference type="GO" id="GO:0002040">
    <property type="term" value="P:sprouting angiogenesis"/>
    <property type="evidence" value="ECO:0000316"/>
    <property type="project" value="ZFIN"/>
</dbReference>
<dbReference type="GO" id="GO:0001570">
    <property type="term" value="P:vasculogenesis"/>
    <property type="evidence" value="ECO:0000250"/>
    <property type="project" value="UniProtKB"/>
</dbReference>
<dbReference type="CDD" id="cd15190">
    <property type="entry name" value="7tmA_Apelin_R"/>
    <property type="match status" value="1"/>
</dbReference>
<dbReference type="FunFam" id="1.20.1070.10:FF:000106">
    <property type="entry name" value="Apelin receptor a"/>
    <property type="match status" value="1"/>
</dbReference>
<dbReference type="Gene3D" id="1.20.1070.10">
    <property type="entry name" value="Rhodopsin 7-helix transmembrane proteins"/>
    <property type="match status" value="1"/>
</dbReference>
<dbReference type="InterPro" id="IPR000248">
    <property type="entry name" value="ATII_rcpt"/>
</dbReference>
<dbReference type="InterPro" id="IPR050119">
    <property type="entry name" value="CCR1-9-like"/>
</dbReference>
<dbReference type="InterPro" id="IPR000276">
    <property type="entry name" value="GPCR_Rhodpsn"/>
</dbReference>
<dbReference type="InterPro" id="IPR017452">
    <property type="entry name" value="GPCR_Rhodpsn_7TM"/>
</dbReference>
<dbReference type="PANTHER" id="PTHR10489:SF953">
    <property type="entry name" value="APELIN RECEPTOR"/>
    <property type="match status" value="1"/>
</dbReference>
<dbReference type="PANTHER" id="PTHR10489">
    <property type="entry name" value="CELL ADHESION MOLECULE"/>
    <property type="match status" value="1"/>
</dbReference>
<dbReference type="Pfam" id="PF00001">
    <property type="entry name" value="7tm_1"/>
    <property type="match status" value="1"/>
</dbReference>
<dbReference type="PRINTS" id="PR00241">
    <property type="entry name" value="ANGIOTENSINR"/>
</dbReference>
<dbReference type="PRINTS" id="PR00237">
    <property type="entry name" value="GPCRRHODOPSN"/>
</dbReference>
<dbReference type="SUPFAM" id="SSF81321">
    <property type="entry name" value="Family A G protein-coupled receptor-like"/>
    <property type="match status" value="1"/>
</dbReference>
<dbReference type="PROSITE" id="PS00237">
    <property type="entry name" value="G_PROTEIN_RECEP_F1_1"/>
    <property type="match status" value="1"/>
</dbReference>
<dbReference type="PROSITE" id="PS50262">
    <property type="entry name" value="G_PROTEIN_RECEP_F1_2"/>
    <property type="match status" value="1"/>
</dbReference>
<proteinExistence type="evidence at protein level"/>
<reference evidence="12 15" key="1">
    <citation type="journal article" date="2007" name="Gene Expr. Patterns">
        <title>Zebrafish angiotensin II receptor-like 1a (agtrl1a) is expressed in migrating hypoblast, vasculature, and in multiple embryonic epithelia.</title>
        <authorList>
            <person name="Tucker B."/>
            <person name="Hepperle C."/>
            <person name="Kortschak D."/>
            <person name="Rainbird B."/>
            <person name="Wells S."/>
            <person name="Oates A.C."/>
            <person name="Lardelli M."/>
        </authorList>
    </citation>
    <scope>NUCLEOTIDE SEQUENCE [MRNA]</scope>
    <scope>TISSUE SPECIFICITY</scope>
    <source>
        <tissue evidence="7">Embryo</tissue>
    </source>
</reference>
<reference evidence="14" key="2">
    <citation type="submission" date="2006-09" db="EMBL/GenBank/DDBJ databases">
        <authorList>
            <consortium name="NIH - Zebrafish Gene Collection (ZGC) project"/>
        </authorList>
    </citation>
    <scope>NUCLEOTIDE SEQUENCE [LARGE SCALE MRNA]</scope>
    <source>
        <tissue evidence="14">Embryo</tissue>
        <tissue evidence="13">Kidney</tissue>
    </source>
</reference>
<reference evidence="12" key="3">
    <citation type="journal article" date="2007" name="Dev. Cell">
        <title>The G protein-coupled receptor Agtrl1b regulates early development of myocardial progenitors.</title>
        <authorList>
            <person name="Scott I.C."/>
            <person name="Masri B."/>
            <person name="D'Amico L.A."/>
            <person name="Jin S.-W."/>
            <person name="Jungblut B."/>
            <person name="Wehman A.M."/>
            <person name="Baier H."/>
            <person name="Audigier Y."/>
            <person name="Stainier D.Y.R."/>
        </authorList>
    </citation>
    <scope>FUNCTION</scope>
</reference>
<reference key="4">
    <citation type="journal article" date="2013" name="Dev. Cell">
        <title>ELABELA: a hormone essential for heart development signals via the apelin receptor.</title>
        <authorList>
            <person name="Chng S.C."/>
            <person name="Ho L."/>
            <person name="Tian J."/>
            <person name="Reversade B."/>
        </authorList>
    </citation>
    <scope>FUNCTION</scope>
    <scope>INTERACTION WITH APELA</scope>
    <scope>DISRUPTION PHENOTYPE</scope>
</reference>
<reference key="5">
    <citation type="journal article" date="2014" name="Science">
        <title>Toddler: an embryonic signal that promotes cell movement via apelin receptors.</title>
        <authorList>
            <person name="Pauli A."/>
            <person name="Norris M.L."/>
            <person name="Valen E."/>
            <person name="Chew G.L."/>
            <person name="Gagnon J.A."/>
            <person name="Zimmerman S."/>
            <person name="Mitchell A."/>
            <person name="Ma J."/>
            <person name="Dubrulle J."/>
            <person name="Reyon D."/>
            <person name="Tsai S.Q."/>
            <person name="Joung J.K."/>
            <person name="Saghatelian A."/>
            <person name="Schier A.F."/>
        </authorList>
    </citation>
    <scope>FUNCTION</scope>
    <scope>INTERACTION WITH APELA</scope>
    <scope>DISRUPTION PHENOTYPE</scope>
</reference>
<reference key="6">
    <citation type="journal article" date="2015" name="Elife">
        <title>The hormonal peptide Elabela guides angioblasts to the midline during vasculogenesis.</title>
        <authorList>
            <person name="Helker C.S."/>
            <person name="Schuermann A."/>
            <person name="Pollmann C."/>
            <person name="Chng S.C."/>
            <person name="Kiefer F."/>
            <person name="Reversade B."/>
            <person name="Herzog W."/>
        </authorList>
    </citation>
    <scope>FUNCTION</scope>
    <scope>DISRUPTION PHENOTYPE</scope>
</reference>
<organism>
    <name type="scientific">Danio rerio</name>
    <name type="common">Zebrafish</name>
    <name type="synonym">Brachydanio rerio</name>
    <dbReference type="NCBI Taxonomy" id="7955"/>
    <lineage>
        <taxon>Eukaryota</taxon>
        <taxon>Metazoa</taxon>
        <taxon>Chordata</taxon>
        <taxon>Craniata</taxon>
        <taxon>Vertebrata</taxon>
        <taxon>Euteleostomi</taxon>
        <taxon>Actinopterygii</taxon>
        <taxon>Neopterygii</taxon>
        <taxon>Teleostei</taxon>
        <taxon>Ostariophysi</taxon>
        <taxon>Cypriniformes</taxon>
        <taxon>Danionidae</taxon>
        <taxon>Danioninae</taxon>
        <taxon>Danio</taxon>
    </lineage>
</organism>
<accession>Q7SZP9</accession>
<accession>Q002B2</accession>
<accession>Q08CP6</accession>
<protein>
    <recommendedName>
        <fullName>Apelin receptor A</fullName>
    </recommendedName>
    <alternativeName>
        <fullName>Angiotensin II receptor-like 1a</fullName>
    </alternativeName>
    <alternativeName>
        <fullName>Angiotensin receptor-like 1a</fullName>
    </alternativeName>
    <alternativeName>
        <fullName>G-protein coupled receptor APJ A</fullName>
    </alternativeName>
</protein>
<feature type="chain" id="PRO_0000312593" description="Apelin receptor A">
    <location>
        <begin position="1"/>
        <end position="362"/>
    </location>
</feature>
<feature type="topological domain" description="Extracellular" evidence="5">
    <location>
        <begin position="1"/>
        <end position="34"/>
    </location>
</feature>
<feature type="transmembrane region" description="Helical; Name=1" evidence="5">
    <location>
        <begin position="35"/>
        <end position="55"/>
    </location>
</feature>
<feature type="topological domain" description="Cytoplasmic" evidence="5">
    <location>
        <begin position="56"/>
        <end position="73"/>
    </location>
</feature>
<feature type="transmembrane region" description="Helical; Name=2" evidence="5">
    <location>
        <begin position="74"/>
        <end position="94"/>
    </location>
</feature>
<feature type="topological domain" description="Extracellular" evidence="5">
    <location>
        <begin position="95"/>
        <end position="106"/>
    </location>
</feature>
<feature type="transmembrane region" description="Helical; Name=3" evidence="5">
    <location>
        <begin position="107"/>
        <end position="127"/>
    </location>
</feature>
<feature type="topological domain" description="Cytoplasmic" evidence="5">
    <location>
        <begin position="128"/>
        <end position="149"/>
    </location>
</feature>
<feature type="transmembrane region" description="Helical; Name=4" evidence="5">
    <location>
        <begin position="150"/>
        <end position="170"/>
    </location>
</feature>
<feature type="topological domain" description="Extracellular" evidence="5">
    <location>
        <begin position="171"/>
        <end position="211"/>
    </location>
</feature>
<feature type="transmembrane region" description="Helical; Name=5" evidence="5">
    <location>
        <begin position="212"/>
        <end position="232"/>
    </location>
</feature>
<feature type="topological domain" description="Cytoplasmic" evidence="5">
    <location>
        <begin position="233"/>
        <end position="248"/>
    </location>
</feature>
<feature type="transmembrane region" description="Helical; Name=6" evidence="5">
    <location>
        <begin position="249"/>
        <end position="269"/>
    </location>
</feature>
<feature type="topological domain" description="Extracellular" evidence="5">
    <location>
        <begin position="270"/>
        <end position="284"/>
    </location>
</feature>
<feature type="transmembrane region" description="Helical; Name=7" evidence="5">
    <location>
        <begin position="285"/>
        <end position="305"/>
    </location>
</feature>
<feature type="topological domain" description="Cytoplasmic" evidence="5 15">
    <location>
        <begin position="306"/>
        <end position="362"/>
    </location>
</feature>
<feature type="glycosylation site" description="N-linked (GlcNAc...) asparagine" evidence="5">
    <location>
        <position position="19"/>
    </location>
</feature>
<feature type="glycosylation site" description="N-linked (GlcNAc...) asparagine" evidence="5">
    <location>
        <position position="180"/>
    </location>
</feature>
<feature type="disulfide bond" evidence="1">
    <location>
        <begin position="23"/>
        <end position="286"/>
    </location>
</feature>
<feature type="disulfide bond" evidence="1">
    <location>
        <begin position="105"/>
        <end position="184"/>
    </location>
</feature>
<feature type="sequence conflict" description="In Ref. 2; AAI24151." evidence="12" ref="2">
    <original>S</original>
    <variation>P</variation>
    <location>
        <position position="5"/>
    </location>
</feature>
<feature type="sequence conflict" description="In Ref. 1; ABI99470." evidence="12" ref="1">
    <original>F</original>
    <variation>FL</variation>
    <location>
        <position position="218"/>
    </location>
</feature>
<feature type="sequence conflict" description="In Ref. 2; AAI24151." evidence="12" ref="2">
    <original>V</original>
    <variation>A</variation>
    <location>
        <position position="305"/>
    </location>
</feature>